<evidence type="ECO:0000255" key="1">
    <source>
        <dbReference type="HAMAP-Rule" id="MF_00179"/>
    </source>
</evidence>
<keyword id="KW-0342">GTP-binding</keyword>
<keyword id="KW-0378">Hydrolase</keyword>
<keyword id="KW-0479">Metal-binding</keyword>
<keyword id="KW-0547">Nucleotide-binding</keyword>
<keyword id="KW-0686">Riboflavin biosynthesis</keyword>
<keyword id="KW-0862">Zinc</keyword>
<sequence length="192" mass="21840">MKRLEVSNQAKLPTQFGEFYIQCFREKNSNGSKDHLVIFTLDFPENPLVRLHSECLTGDALGSQKCDCGVALQMALERISKEGGLVIYLRQEGRGIGLFNKVNAYALQDKGYDTIQANEMIGFKDDERDYGIAGEILEYYRIKKMRLLTNNPKKIAALEKYAEVTRESLIVCANEHNQGYLEVKKLKMGHLL</sequence>
<organism>
    <name type="scientific">Helicobacter acinonychis (strain Sheeba)</name>
    <dbReference type="NCBI Taxonomy" id="382638"/>
    <lineage>
        <taxon>Bacteria</taxon>
        <taxon>Pseudomonadati</taxon>
        <taxon>Campylobacterota</taxon>
        <taxon>Epsilonproteobacteria</taxon>
        <taxon>Campylobacterales</taxon>
        <taxon>Helicobacteraceae</taxon>
        <taxon>Helicobacter</taxon>
    </lineage>
</organism>
<gene>
    <name evidence="1" type="primary">ribA</name>
    <name type="ordered locus">Hac_0920</name>
</gene>
<reference key="1">
    <citation type="journal article" date="2006" name="PLoS Genet.">
        <title>Who ate whom? Adaptive Helicobacter genomic changes that accompanied a host jump from early humans to large felines.</title>
        <authorList>
            <person name="Eppinger M."/>
            <person name="Baar C."/>
            <person name="Linz B."/>
            <person name="Raddatz G."/>
            <person name="Lanz C."/>
            <person name="Keller H."/>
            <person name="Morelli G."/>
            <person name="Gressmann H."/>
            <person name="Achtman M."/>
            <person name="Schuster S.C."/>
        </authorList>
    </citation>
    <scope>NUCLEOTIDE SEQUENCE [LARGE SCALE GENOMIC DNA]</scope>
    <source>
        <strain>Sheeba</strain>
    </source>
</reference>
<proteinExistence type="inferred from homology"/>
<dbReference type="EC" id="3.5.4.25" evidence="1"/>
<dbReference type="EMBL" id="AM260522">
    <property type="protein sequence ID" value="CAJ99697.1"/>
    <property type="molecule type" value="Genomic_DNA"/>
</dbReference>
<dbReference type="RefSeq" id="WP_011577809.1">
    <property type="nucleotide sequence ID" value="NC_008229.1"/>
</dbReference>
<dbReference type="SMR" id="Q17XC9"/>
<dbReference type="STRING" id="382638.Hac_0920"/>
<dbReference type="GeneID" id="31758318"/>
<dbReference type="KEGG" id="hac:Hac_0920"/>
<dbReference type="eggNOG" id="COG0807">
    <property type="taxonomic scope" value="Bacteria"/>
</dbReference>
<dbReference type="HOGENOM" id="CLU_020273_2_1_7"/>
<dbReference type="OrthoDB" id="9793111at2"/>
<dbReference type="BioCyc" id="HACI382638:HAC_RS03955-MONOMER"/>
<dbReference type="UniPathway" id="UPA00275">
    <property type="reaction ID" value="UER00400"/>
</dbReference>
<dbReference type="Proteomes" id="UP000000775">
    <property type="component" value="Chromosome"/>
</dbReference>
<dbReference type="GO" id="GO:0005829">
    <property type="term" value="C:cytosol"/>
    <property type="evidence" value="ECO:0007669"/>
    <property type="project" value="TreeGrafter"/>
</dbReference>
<dbReference type="GO" id="GO:0005525">
    <property type="term" value="F:GTP binding"/>
    <property type="evidence" value="ECO:0007669"/>
    <property type="project" value="UniProtKB-KW"/>
</dbReference>
<dbReference type="GO" id="GO:0003935">
    <property type="term" value="F:GTP cyclohydrolase II activity"/>
    <property type="evidence" value="ECO:0007669"/>
    <property type="project" value="UniProtKB-UniRule"/>
</dbReference>
<dbReference type="GO" id="GO:0008270">
    <property type="term" value="F:zinc ion binding"/>
    <property type="evidence" value="ECO:0007669"/>
    <property type="project" value="UniProtKB-UniRule"/>
</dbReference>
<dbReference type="GO" id="GO:0009231">
    <property type="term" value="P:riboflavin biosynthetic process"/>
    <property type="evidence" value="ECO:0007669"/>
    <property type="project" value="UniProtKB-UniRule"/>
</dbReference>
<dbReference type="CDD" id="cd00641">
    <property type="entry name" value="GTP_cyclohydro2"/>
    <property type="match status" value="1"/>
</dbReference>
<dbReference type="FunFam" id="3.40.50.10990:FF:000001">
    <property type="entry name" value="Riboflavin biosynthesis protein RibBA"/>
    <property type="match status" value="1"/>
</dbReference>
<dbReference type="Gene3D" id="3.40.50.10990">
    <property type="entry name" value="GTP cyclohydrolase II"/>
    <property type="match status" value="1"/>
</dbReference>
<dbReference type="HAMAP" id="MF_00179">
    <property type="entry name" value="RibA"/>
    <property type="match status" value="1"/>
</dbReference>
<dbReference type="InterPro" id="IPR032677">
    <property type="entry name" value="GTP_cyclohydro_II"/>
</dbReference>
<dbReference type="InterPro" id="IPR000926">
    <property type="entry name" value="RibA"/>
</dbReference>
<dbReference type="InterPro" id="IPR036144">
    <property type="entry name" value="RibA-like_sf"/>
</dbReference>
<dbReference type="NCBIfam" id="NF001591">
    <property type="entry name" value="PRK00393.1"/>
    <property type="match status" value="1"/>
</dbReference>
<dbReference type="NCBIfam" id="TIGR00505">
    <property type="entry name" value="ribA"/>
    <property type="match status" value="1"/>
</dbReference>
<dbReference type="PANTHER" id="PTHR21327:SF18">
    <property type="entry name" value="3,4-DIHYDROXY-2-BUTANONE 4-PHOSPHATE SYNTHASE"/>
    <property type="match status" value="1"/>
</dbReference>
<dbReference type="PANTHER" id="PTHR21327">
    <property type="entry name" value="GTP CYCLOHYDROLASE II-RELATED"/>
    <property type="match status" value="1"/>
</dbReference>
<dbReference type="Pfam" id="PF00925">
    <property type="entry name" value="GTP_cyclohydro2"/>
    <property type="match status" value="1"/>
</dbReference>
<dbReference type="SUPFAM" id="SSF142695">
    <property type="entry name" value="RibA-like"/>
    <property type="match status" value="1"/>
</dbReference>
<name>RIBA_HELAH</name>
<comment type="function">
    <text evidence="1">Catalyzes the conversion of GTP to 2,5-diamino-6-ribosylamino-4(3H)-pyrimidinone 5'-phosphate (DARP), formate and pyrophosphate.</text>
</comment>
<comment type="catalytic activity">
    <reaction evidence="1">
        <text>GTP + 4 H2O = 2,5-diamino-6-hydroxy-4-(5-phosphoribosylamino)-pyrimidine + formate + 2 phosphate + 3 H(+)</text>
        <dbReference type="Rhea" id="RHEA:23704"/>
        <dbReference type="ChEBI" id="CHEBI:15377"/>
        <dbReference type="ChEBI" id="CHEBI:15378"/>
        <dbReference type="ChEBI" id="CHEBI:15740"/>
        <dbReference type="ChEBI" id="CHEBI:37565"/>
        <dbReference type="ChEBI" id="CHEBI:43474"/>
        <dbReference type="ChEBI" id="CHEBI:58614"/>
        <dbReference type="EC" id="3.5.4.25"/>
    </reaction>
</comment>
<comment type="cofactor">
    <cofactor evidence="1">
        <name>Zn(2+)</name>
        <dbReference type="ChEBI" id="CHEBI:29105"/>
    </cofactor>
    <text evidence="1">Binds 1 zinc ion per subunit.</text>
</comment>
<comment type="pathway">
    <text evidence="1">Cofactor biosynthesis; riboflavin biosynthesis; 5-amino-6-(D-ribitylamino)uracil from GTP: step 1/4.</text>
</comment>
<comment type="similarity">
    <text evidence="1">Belongs to the GTP cyclohydrolase II family.</text>
</comment>
<accession>Q17XC9</accession>
<feature type="chain" id="PRO_1000040567" description="GTP cyclohydrolase-2">
    <location>
        <begin position="1"/>
        <end position="192"/>
    </location>
</feature>
<feature type="active site" description="Proton acceptor" evidence="1">
    <location>
        <position position="126"/>
    </location>
</feature>
<feature type="active site" description="Nucleophile" evidence="1">
    <location>
        <position position="128"/>
    </location>
</feature>
<feature type="binding site" evidence="1">
    <location>
        <begin position="50"/>
        <end position="54"/>
    </location>
    <ligand>
        <name>GTP</name>
        <dbReference type="ChEBI" id="CHEBI:37565"/>
    </ligand>
</feature>
<feature type="binding site" evidence="1">
    <location>
        <position position="55"/>
    </location>
    <ligand>
        <name>Zn(2+)</name>
        <dbReference type="ChEBI" id="CHEBI:29105"/>
        <note>catalytic</note>
    </ligand>
</feature>
<feature type="binding site" evidence="1">
    <location>
        <position position="66"/>
    </location>
    <ligand>
        <name>Zn(2+)</name>
        <dbReference type="ChEBI" id="CHEBI:29105"/>
        <note>catalytic</note>
    </ligand>
</feature>
<feature type="binding site" evidence="1">
    <location>
        <position position="68"/>
    </location>
    <ligand>
        <name>Zn(2+)</name>
        <dbReference type="ChEBI" id="CHEBI:29105"/>
        <note>catalytic</note>
    </ligand>
</feature>
<feature type="binding site" evidence="1">
    <location>
        <begin position="92"/>
        <end position="94"/>
    </location>
    <ligand>
        <name>GTP</name>
        <dbReference type="ChEBI" id="CHEBI:37565"/>
    </ligand>
</feature>
<feature type="binding site" evidence="1">
    <location>
        <position position="114"/>
    </location>
    <ligand>
        <name>GTP</name>
        <dbReference type="ChEBI" id="CHEBI:37565"/>
    </ligand>
</feature>
<feature type="binding site" evidence="1">
    <location>
        <position position="149"/>
    </location>
    <ligand>
        <name>GTP</name>
        <dbReference type="ChEBI" id="CHEBI:37565"/>
    </ligand>
</feature>
<feature type="binding site" evidence="1">
    <location>
        <position position="154"/>
    </location>
    <ligand>
        <name>GTP</name>
        <dbReference type="ChEBI" id="CHEBI:37565"/>
    </ligand>
</feature>
<protein>
    <recommendedName>
        <fullName evidence="1">GTP cyclohydrolase-2</fullName>
        <ecNumber evidence="1">3.5.4.25</ecNumber>
    </recommendedName>
    <alternativeName>
        <fullName evidence="1">GTP cyclohydrolase II</fullName>
    </alternativeName>
</protein>